<dbReference type="EC" id="4.6.1.12" evidence="1"/>
<dbReference type="EMBL" id="CP001108">
    <property type="protein sequence ID" value="ACF45608.1"/>
    <property type="molecule type" value="Genomic_DNA"/>
</dbReference>
<dbReference type="RefSeq" id="WP_012505145.1">
    <property type="nucleotide sequence ID" value="NC_011059.1"/>
</dbReference>
<dbReference type="SMR" id="B4S5L1"/>
<dbReference type="STRING" id="290512.Paes_0552"/>
<dbReference type="KEGG" id="paa:Paes_0552"/>
<dbReference type="eggNOG" id="COG0245">
    <property type="taxonomic scope" value="Bacteria"/>
</dbReference>
<dbReference type="HOGENOM" id="CLU_084630_2_0_10"/>
<dbReference type="UniPathway" id="UPA00056">
    <property type="reaction ID" value="UER00095"/>
</dbReference>
<dbReference type="Proteomes" id="UP000002725">
    <property type="component" value="Chromosome"/>
</dbReference>
<dbReference type="GO" id="GO:0008685">
    <property type="term" value="F:2-C-methyl-D-erythritol 2,4-cyclodiphosphate synthase activity"/>
    <property type="evidence" value="ECO:0007669"/>
    <property type="project" value="UniProtKB-UniRule"/>
</dbReference>
<dbReference type="GO" id="GO:0046872">
    <property type="term" value="F:metal ion binding"/>
    <property type="evidence" value="ECO:0007669"/>
    <property type="project" value="UniProtKB-KW"/>
</dbReference>
<dbReference type="GO" id="GO:0019288">
    <property type="term" value="P:isopentenyl diphosphate biosynthetic process, methylerythritol 4-phosphate pathway"/>
    <property type="evidence" value="ECO:0007669"/>
    <property type="project" value="UniProtKB-UniRule"/>
</dbReference>
<dbReference type="GO" id="GO:0016114">
    <property type="term" value="P:terpenoid biosynthetic process"/>
    <property type="evidence" value="ECO:0007669"/>
    <property type="project" value="InterPro"/>
</dbReference>
<dbReference type="CDD" id="cd00554">
    <property type="entry name" value="MECDP_synthase"/>
    <property type="match status" value="1"/>
</dbReference>
<dbReference type="FunFam" id="3.30.1330.50:FF:000001">
    <property type="entry name" value="2-C-methyl-D-erythritol 2,4-cyclodiphosphate synthase"/>
    <property type="match status" value="1"/>
</dbReference>
<dbReference type="Gene3D" id="3.30.1330.50">
    <property type="entry name" value="2-C-methyl-D-erythritol 2,4-cyclodiphosphate synthase"/>
    <property type="match status" value="1"/>
</dbReference>
<dbReference type="HAMAP" id="MF_00107">
    <property type="entry name" value="IspF"/>
    <property type="match status" value="1"/>
</dbReference>
<dbReference type="InterPro" id="IPR003526">
    <property type="entry name" value="MECDP_synthase"/>
</dbReference>
<dbReference type="InterPro" id="IPR020555">
    <property type="entry name" value="MECDP_synthase_CS"/>
</dbReference>
<dbReference type="InterPro" id="IPR036571">
    <property type="entry name" value="MECDP_synthase_sf"/>
</dbReference>
<dbReference type="NCBIfam" id="TIGR00151">
    <property type="entry name" value="ispF"/>
    <property type="match status" value="1"/>
</dbReference>
<dbReference type="PANTHER" id="PTHR43181">
    <property type="entry name" value="2-C-METHYL-D-ERYTHRITOL 2,4-CYCLODIPHOSPHATE SYNTHASE, CHLOROPLASTIC"/>
    <property type="match status" value="1"/>
</dbReference>
<dbReference type="PANTHER" id="PTHR43181:SF1">
    <property type="entry name" value="2-C-METHYL-D-ERYTHRITOL 2,4-CYCLODIPHOSPHATE SYNTHASE, CHLOROPLASTIC"/>
    <property type="match status" value="1"/>
</dbReference>
<dbReference type="Pfam" id="PF02542">
    <property type="entry name" value="YgbB"/>
    <property type="match status" value="1"/>
</dbReference>
<dbReference type="SUPFAM" id="SSF69765">
    <property type="entry name" value="IpsF-like"/>
    <property type="match status" value="1"/>
</dbReference>
<dbReference type="PROSITE" id="PS01350">
    <property type="entry name" value="ISPF"/>
    <property type="match status" value="1"/>
</dbReference>
<gene>
    <name evidence="1" type="primary">ispF</name>
    <name type="ordered locus">Paes_0552</name>
</gene>
<reference key="1">
    <citation type="submission" date="2008-06" db="EMBL/GenBank/DDBJ databases">
        <title>Complete sequence of chromosome of Prosthecochloris aestuarii DSM 271.</title>
        <authorList>
            <consortium name="US DOE Joint Genome Institute"/>
            <person name="Lucas S."/>
            <person name="Copeland A."/>
            <person name="Lapidus A."/>
            <person name="Glavina del Rio T."/>
            <person name="Dalin E."/>
            <person name="Tice H."/>
            <person name="Bruce D."/>
            <person name="Goodwin L."/>
            <person name="Pitluck S."/>
            <person name="Schmutz J."/>
            <person name="Larimer F."/>
            <person name="Land M."/>
            <person name="Hauser L."/>
            <person name="Kyrpides N."/>
            <person name="Anderson I."/>
            <person name="Liu Z."/>
            <person name="Li T."/>
            <person name="Zhao F."/>
            <person name="Overmann J."/>
            <person name="Bryant D.A."/>
            <person name="Richardson P."/>
        </authorList>
    </citation>
    <scope>NUCLEOTIDE SEQUENCE [LARGE SCALE GENOMIC DNA]</scope>
    <source>
        <strain>DSM 271 / SK 413</strain>
    </source>
</reference>
<proteinExistence type="inferred from homology"/>
<feature type="chain" id="PRO_1000094279" description="2-C-methyl-D-erythritol 2,4-cyclodiphosphate synthase">
    <location>
        <begin position="1"/>
        <end position="157"/>
    </location>
</feature>
<feature type="binding site" evidence="1">
    <location>
        <begin position="8"/>
        <end position="10"/>
    </location>
    <ligand>
        <name>4-CDP-2-C-methyl-D-erythritol 2-phosphate</name>
        <dbReference type="ChEBI" id="CHEBI:57919"/>
    </ligand>
</feature>
<feature type="binding site" evidence="1">
    <location>
        <position position="8"/>
    </location>
    <ligand>
        <name>a divalent metal cation</name>
        <dbReference type="ChEBI" id="CHEBI:60240"/>
    </ligand>
</feature>
<feature type="binding site" evidence="1">
    <location>
        <position position="10"/>
    </location>
    <ligand>
        <name>a divalent metal cation</name>
        <dbReference type="ChEBI" id="CHEBI:60240"/>
    </ligand>
</feature>
<feature type="binding site" evidence="1">
    <location>
        <begin position="34"/>
        <end position="35"/>
    </location>
    <ligand>
        <name>4-CDP-2-C-methyl-D-erythritol 2-phosphate</name>
        <dbReference type="ChEBI" id="CHEBI:57919"/>
    </ligand>
</feature>
<feature type="binding site" evidence="1">
    <location>
        <position position="42"/>
    </location>
    <ligand>
        <name>a divalent metal cation</name>
        <dbReference type="ChEBI" id="CHEBI:60240"/>
    </ligand>
</feature>
<feature type="binding site" evidence="1">
    <location>
        <begin position="56"/>
        <end position="58"/>
    </location>
    <ligand>
        <name>4-CDP-2-C-methyl-D-erythritol 2-phosphate</name>
        <dbReference type="ChEBI" id="CHEBI:57919"/>
    </ligand>
</feature>
<feature type="binding site" evidence="1">
    <location>
        <begin position="132"/>
        <end position="135"/>
    </location>
    <ligand>
        <name>4-CDP-2-C-methyl-D-erythritol 2-phosphate</name>
        <dbReference type="ChEBI" id="CHEBI:57919"/>
    </ligand>
</feature>
<feature type="binding site" evidence="1">
    <location>
        <position position="142"/>
    </location>
    <ligand>
        <name>4-CDP-2-C-methyl-D-erythritol 2-phosphate</name>
        <dbReference type="ChEBI" id="CHEBI:57919"/>
    </ligand>
</feature>
<feature type="site" description="Transition state stabilizer" evidence="1">
    <location>
        <position position="34"/>
    </location>
</feature>
<feature type="site" description="Transition state stabilizer" evidence="1">
    <location>
        <position position="133"/>
    </location>
</feature>
<evidence type="ECO:0000255" key="1">
    <source>
        <dbReference type="HAMAP-Rule" id="MF_00107"/>
    </source>
</evidence>
<protein>
    <recommendedName>
        <fullName evidence="1">2-C-methyl-D-erythritol 2,4-cyclodiphosphate synthase</fullName>
        <shortName evidence="1">MECDP-synthase</shortName>
        <shortName evidence="1">MECPP-synthase</shortName>
        <shortName evidence="1">MECPS</shortName>
        <ecNumber evidence="1">4.6.1.12</ecNumber>
    </recommendedName>
</protein>
<accession>B4S5L1</accession>
<name>ISPF_PROA2</name>
<organism>
    <name type="scientific">Prosthecochloris aestuarii (strain DSM 271 / SK 413)</name>
    <dbReference type="NCBI Taxonomy" id="290512"/>
    <lineage>
        <taxon>Bacteria</taxon>
        <taxon>Pseudomonadati</taxon>
        <taxon>Chlorobiota</taxon>
        <taxon>Chlorobiia</taxon>
        <taxon>Chlorobiales</taxon>
        <taxon>Chlorobiaceae</taxon>
        <taxon>Prosthecochloris</taxon>
    </lineage>
</organism>
<sequence>MRVGIGIDVHQFVENRKLIIGGIEIPHTMGLKGHSDADVLLHAISDALLGAAALGDIGKHFPDTSPDFKDIDSRILLRHVGKLIADEGYTIVNIDSMLLMERPKVAPYIVAMRESIAECLDIETSRVSVKATTNEKLGYIGRQEGAAAHAVCLIEEK</sequence>
<keyword id="KW-0414">Isoprene biosynthesis</keyword>
<keyword id="KW-0456">Lyase</keyword>
<keyword id="KW-0479">Metal-binding</keyword>
<comment type="function">
    <text evidence="1">Involved in the biosynthesis of isopentenyl diphosphate (IPP) and dimethylallyl diphosphate (DMAPP), two major building blocks of isoprenoid compounds. Catalyzes the conversion of 4-diphosphocytidyl-2-C-methyl-D-erythritol 2-phosphate (CDP-ME2P) to 2-C-methyl-D-erythritol 2,4-cyclodiphosphate (ME-CPP) with a corresponding release of cytidine 5-monophosphate (CMP).</text>
</comment>
<comment type="catalytic activity">
    <reaction evidence="1">
        <text>4-CDP-2-C-methyl-D-erythritol 2-phosphate = 2-C-methyl-D-erythritol 2,4-cyclic diphosphate + CMP</text>
        <dbReference type="Rhea" id="RHEA:23864"/>
        <dbReference type="ChEBI" id="CHEBI:57919"/>
        <dbReference type="ChEBI" id="CHEBI:58483"/>
        <dbReference type="ChEBI" id="CHEBI:60377"/>
        <dbReference type="EC" id="4.6.1.12"/>
    </reaction>
</comment>
<comment type="cofactor">
    <cofactor evidence="1">
        <name>a divalent metal cation</name>
        <dbReference type="ChEBI" id="CHEBI:60240"/>
    </cofactor>
    <text evidence="1">Binds 1 divalent metal cation per subunit.</text>
</comment>
<comment type="pathway">
    <text evidence="1">Isoprenoid biosynthesis; isopentenyl diphosphate biosynthesis via DXP pathway; isopentenyl diphosphate from 1-deoxy-D-xylulose 5-phosphate: step 4/6.</text>
</comment>
<comment type="subunit">
    <text evidence="1">Homotrimer.</text>
</comment>
<comment type="similarity">
    <text evidence="1">Belongs to the IspF family.</text>
</comment>